<comment type="function">
    <text evidence="4">Mannosyltransferase that operates in the biosynthetic pathway of dolichol-linked oligosaccharides, the glycan precursors employed in protein asparagine (N)-glycosylation. The assembly of dolichol-linked oligosaccharides begins on the cytosolic side of the endoplasmic reticulum membrane and finishes in its lumen. The sequential addition of sugars to dolichol pyrophosphate produces dolichol-linked oligosaccharides containing fourteen sugars, including two GlcNAcs, nine mannoses and three glucoses. Once assembled, the oligosaccharide is transferred from the lipid to nascent proteins by oligosaccharyltransferases. In the lumen of the endoplasmic reticulum, catalyzes the addition of the seventh and ninth alpha-1,2-linked mannose residues to Man(6)GlcNAc(2)-PP-dolichol and Man(8)GlcNAc(2)-PP-dolichol respectively.</text>
</comment>
<comment type="catalytic activity">
    <reaction evidence="4">
        <text>an alpha-D-Man-(1-&gt;2)-alpha-D-Man-(1-&gt;2)-alpha-D-Man-(1-&gt;3)-[alpha-D-Man-(1-&gt;3)-alpha-D-Man-(1-&gt;6)]-beta-D-Man-(1-&gt;4)-beta-D-GlcNAc-(1-&gt;4)-alpha-D-GlcNAc-diphospho-di-trans,poly-cis-dolichol + a di-trans,poly-cis-dolichyl beta-D-mannosyl phosphate = an alpha-D-Man-(1-&gt;2)-alpha-D-Man-(1-&gt;2)-alpha-D-Man-(1-&gt;3)-[alpha-D-Man-(1-&gt;2)-alpha-D-Man-(1-&gt;3)-alpha-D-Man-(1-&gt;6)]-beta-D-Man-(1-&gt;4)-beta-D-GlcNAc-(1-&gt;4)-alpha-D-GlcNAc-diphospho-di-trans,poly-cis-dolichol + a di-trans,poly-cis-dolichyl phosphate + H(+)</text>
        <dbReference type="Rhea" id="RHEA:29531"/>
        <dbReference type="Rhea" id="RHEA-COMP:19498"/>
        <dbReference type="Rhea" id="RHEA-COMP:19501"/>
        <dbReference type="Rhea" id="RHEA-COMP:19517"/>
        <dbReference type="Rhea" id="RHEA-COMP:19518"/>
        <dbReference type="ChEBI" id="CHEBI:15378"/>
        <dbReference type="ChEBI" id="CHEBI:57683"/>
        <dbReference type="ChEBI" id="CHEBI:58211"/>
        <dbReference type="ChEBI" id="CHEBI:132516"/>
        <dbReference type="ChEBI" id="CHEBI:132517"/>
        <dbReference type="EC" id="2.4.1.259"/>
    </reaction>
    <physiologicalReaction direction="left-to-right" evidence="6">
        <dbReference type="Rhea" id="RHEA:29532"/>
    </physiologicalReaction>
</comment>
<comment type="catalytic activity">
    <reaction evidence="4">
        <text>an alpha-D-Man-(1-&gt;2)-alpha-D-Man-(1-&gt;2)-alpha-D-Man-(1-&gt;3)-[alpha-D-Man-(1-&gt;2)-alpha-D-Man-(1-&gt;3)-[alpha-D-Man-(1-&gt;6)]-alpha-D-Man-(1-&gt;6)]-beta-D-Man-(1-&gt;4)-beta-D-GlcNAc-(1-&gt;4)-alpha-D-GlcNAc-diphospho-di-trans,poly-cis-dolichol + a di-trans,poly-cis-dolichyl beta-D-mannosyl phosphate = an alpha-D-Man-(1-&gt;2)-alpha-D-Man-(1-&gt;2)-alpha-D-Man-(1-&gt;3)-[alpha-D-Man-(1-&gt;2)-alpha-D-Man-(1-&gt;3)-[alpha-D-Man-(1-&gt;2)-alpha-D-Man-(1-&gt;6)]-alpha-D-Man-(1-&gt;6)]-beta-D-Man-(1-&gt;4)-beta-D-GlcNAc-(1-&gt;4)-alpha-D-GlcNAc-diphospho-di-trans,poly-cis-dolichol + a di-trans,poly-cis-dolichyl phosphate + H(+)</text>
        <dbReference type="Rhea" id="RHEA:29539"/>
        <dbReference type="Rhea" id="RHEA-COMP:19498"/>
        <dbReference type="Rhea" id="RHEA-COMP:19501"/>
        <dbReference type="Rhea" id="RHEA-COMP:19519"/>
        <dbReference type="Rhea" id="RHEA-COMP:19520"/>
        <dbReference type="ChEBI" id="CHEBI:15378"/>
        <dbReference type="ChEBI" id="CHEBI:57683"/>
        <dbReference type="ChEBI" id="CHEBI:58211"/>
        <dbReference type="ChEBI" id="CHEBI:132519"/>
        <dbReference type="ChEBI" id="CHEBI:132520"/>
        <dbReference type="EC" id="2.4.1.261"/>
    </reaction>
    <physiologicalReaction direction="left-to-right" evidence="6">
        <dbReference type="Rhea" id="RHEA:29540"/>
    </physiologicalReaction>
</comment>
<comment type="pathway">
    <text evidence="6">Protein modification; protein glycosylation.</text>
</comment>
<comment type="subcellular location">
    <subcellularLocation>
        <location evidence="6">Endoplasmic reticulum membrane</location>
        <topology evidence="1">Multi-pass membrane protein</topology>
    </subcellularLocation>
</comment>
<comment type="miscellaneous">
    <text>In the absence of ALG9 activity, the N-glycans transferred to proteins are aberrant, indicating that the oligosaccharyltransferase (OST) complex is substrate-tolerant.</text>
</comment>
<comment type="similarity">
    <text evidence="5">Belongs to the glycosyltransferase 22 family.</text>
</comment>
<name>ALG9_ARATH</name>
<sequence>MDLTTTRQRRPLISDSSSSSSTKSYSKTDKPGRSNGGDAEDGGLRWFLPFIALCYLRYMSATSNIIHDCDEVFNYWEPLHYILYKSGFQTWEYSSNFALRSYLYILFHELAGRPASWWFGDDKVRVFYAVRLFLGLVSAVSDTVLVVALSRKYGKRIATYAVAMLCLTSGCFFASTSFLPSSFSMYAISLSSGLLLFEKYAMAVAVSVVGVILGWPFSILAFLPVVIYSLVKRFKQAFIAGAVTTIFLLGVSLLVDYYYYKRWTSSVLNLLIYNVLGGGESHLYGTEGALFYIRNGFNNFNFCFILAMLFVAIYPVIRRKYDRALLVVISPMYIWLAFMSLQPHKEERFLYPIYPLICVSASAVIENIPELFREKYSSRESLLVTITKYMRPVILGCILCASHSRTFALINGYSAPLEVYKLLEHHDDAGPGSVLCVGSEWHRYPSSFFVPHYISEVRWIDDGFRGLLPFPFNNTLGGTSASPPYFNNKNQASEEQYLKNIETCTFLIELQLSRPYQYRGSDLSTWEAIAVLPYLDRELSPAKYRSFFIPHMWQEKNVFGKYVALRRVPK</sequence>
<reference key="1">
    <citation type="journal article" date="2000" name="Nature">
        <title>Sequence and analysis of chromosome 1 of the plant Arabidopsis thaliana.</title>
        <authorList>
            <person name="Theologis A."/>
            <person name="Ecker J.R."/>
            <person name="Palm C.J."/>
            <person name="Federspiel N.A."/>
            <person name="Kaul S."/>
            <person name="White O."/>
            <person name="Alonso J."/>
            <person name="Altafi H."/>
            <person name="Araujo R."/>
            <person name="Bowman C.L."/>
            <person name="Brooks S.Y."/>
            <person name="Buehler E."/>
            <person name="Chan A."/>
            <person name="Chao Q."/>
            <person name="Chen H."/>
            <person name="Cheuk R.F."/>
            <person name="Chin C.W."/>
            <person name="Chung M.K."/>
            <person name="Conn L."/>
            <person name="Conway A.B."/>
            <person name="Conway A.R."/>
            <person name="Creasy T.H."/>
            <person name="Dewar K."/>
            <person name="Dunn P."/>
            <person name="Etgu P."/>
            <person name="Feldblyum T.V."/>
            <person name="Feng J.-D."/>
            <person name="Fong B."/>
            <person name="Fujii C.Y."/>
            <person name="Gill J.E."/>
            <person name="Goldsmith A.D."/>
            <person name="Haas B."/>
            <person name="Hansen N.F."/>
            <person name="Hughes B."/>
            <person name="Huizar L."/>
            <person name="Hunter J.L."/>
            <person name="Jenkins J."/>
            <person name="Johnson-Hopson C."/>
            <person name="Khan S."/>
            <person name="Khaykin E."/>
            <person name="Kim C.J."/>
            <person name="Koo H.L."/>
            <person name="Kremenetskaia I."/>
            <person name="Kurtz D.B."/>
            <person name="Kwan A."/>
            <person name="Lam B."/>
            <person name="Langin-Hooper S."/>
            <person name="Lee A."/>
            <person name="Lee J.M."/>
            <person name="Lenz C.A."/>
            <person name="Li J.H."/>
            <person name="Li Y.-P."/>
            <person name="Lin X."/>
            <person name="Liu S.X."/>
            <person name="Liu Z.A."/>
            <person name="Luros J.S."/>
            <person name="Maiti R."/>
            <person name="Marziali A."/>
            <person name="Militscher J."/>
            <person name="Miranda M."/>
            <person name="Nguyen M."/>
            <person name="Nierman W.C."/>
            <person name="Osborne B.I."/>
            <person name="Pai G."/>
            <person name="Peterson J."/>
            <person name="Pham P.K."/>
            <person name="Rizzo M."/>
            <person name="Rooney T."/>
            <person name="Rowley D."/>
            <person name="Sakano H."/>
            <person name="Salzberg S.L."/>
            <person name="Schwartz J.R."/>
            <person name="Shinn P."/>
            <person name="Southwick A.M."/>
            <person name="Sun H."/>
            <person name="Tallon L.J."/>
            <person name="Tambunga G."/>
            <person name="Toriumi M.J."/>
            <person name="Town C.D."/>
            <person name="Utterback T."/>
            <person name="Van Aken S."/>
            <person name="Vaysberg M."/>
            <person name="Vysotskaia V.S."/>
            <person name="Walker M."/>
            <person name="Wu D."/>
            <person name="Yu G."/>
            <person name="Fraser C.M."/>
            <person name="Venter J.C."/>
            <person name="Davis R.W."/>
        </authorList>
    </citation>
    <scope>NUCLEOTIDE SEQUENCE [LARGE SCALE GENOMIC DNA]</scope>
    <source>
        <strain>cv. Columbia</strain>
    </source>
</reference>
<reference key="2">
    <citation type="journal article" date="2017" name="Plant J.">
        <title>Araport11: a complete reannotation of the Arabidopsis thaliana reference genome.</title>
        <authorList>
            <person name="Cheng C.Y."/>
            <person name="Krishnakumar V."/>
            <person name="Chan A.P."/>
            <person name="Thibaud-Nissen F."/>
            <person name="Schobel S."/>
            <person name="Town C.D."/>
        </authorList>
    </citation>
    <scope>GENOME REANNOTATION</scope>
    <source>
        <strain>cv. Columbia</strain>
    </source>
</reference>
<reference key="3">
    <citation type="journal article" date="2003" name="Science">
        <title>Empirical analysis of transcriptional activity in the Arabidopsis genome.</title>
        <authorList>
            <person name="Yamada K."/>
            <person name="Lim J."/>
            <person name="Dale J.M."/>
            <person name="Chen H."/>
            <person name="Shinn P."/>
            <person name="Palm C.J."/>
            <person name="Southwick A.M."/>
            <person name="Wu H.C."/>
            <person name="Kim C.J."/>
            <person name="Nguyen M."/>
            <person name="Pham P.K."/>
            <person name="Cheuk R.F."/>
            <person name="Karlin-Newmann G."/>
            <person name="Liu S.X."/>
            <person name="Lam B."/>
            <person name="Sakano H."/>
            <person name="Wu T."/>
            <person name="Yu G."/>
            <person name="Miranda M."/>
            <person name="Quach H.L."/>
            <person name="Tripp M."/>
            <person name="Chang C.H."/>
            <person name="Lee J.M."/>
            <person name="Toriumi M.J."/>
            <person name="Chan M.M."/>
            <person name="Tang C.C."/>
            <person name="Onodera C.S."/>
            <person name="Deng J.M."/>
            <person name="Akiyama K."/>
            <person name="Ansari Y."/>
            <person name="Arakawa T."/>
            <person name="Banh J."/>
            <person name="Banno F."/>
            <person name="Bowser L."/>
            <person name="Brooks S.Y."/>
            <person name="Carninci P."/>
            <person name="Chao Q."/>
            <person name="Choy N."/>
            <person name="Enju A."/>
            <person name="Goldsmith A.D."/>
            <person name="Gurjal M."/>
            <person name="Hansen N.F."/>
            <person name="Hayashizaki Y."/>
            <person name="Johnson-Hopson C."/>
            <person name="Hsuan V.W."/>
            <person name="Iida K."/>
            <person name="Karnes M."/>
            <person name="Khan S."/>
            <person name="Koesema E."/>
            <person name="Ishida J."/>
            <person name="Jiang P.X."/>
            <person name="Jones T."/>
            <person name="Kawai J."/>
            <person name="Kamiya A."/>
            <person name="Meyers C."/>
            <person name="Nakajima M."/>
            <person name="Narusaka M."/>
            <person name="Seki M."/>
            <person name="Sakurai T."/>
            <person name="Satou M."/>
            <person name="Tamse R."/>
            <person name="Vaysberg M."/>
            <person name="Wallender E.K."/>
            <person name="Wong C."/>
            <person name="Yamamura Y."/>
            <person name="Yuan S."/>
            <person name="Shinozaki K."/>
            <person name="Davis R.W."/>
            <person name="Theologis A."/>
            <person name="Ecker J.R."/>
        </authorList>
    </citation>
    <scope>NUCLEOTIDE SEQUENCE [LARGE SCALE MRNA]</scope>
    <source>
        <strain>cv. Columbia</strain>
    </source>
</reference>
<reference key="4">
    <citation type="journal article" date="2009" name="Plant Cell">
        <title>Mutations of an alpha1,6 mannosyltransferase inhibit endoplasmic reticulum-associated degradation of defective brassinosteroid receptors in Arabidopsis.</title>
        <authorList>
            <person name="Hong Z."/>
            <person name="Jin H."/>
            <person name="Fitchette A.C."/>
            <person name="Xia Y."/>
            <person name="Monk A.M."/>
            <person name="Faye L."/>
            <person name="Li J."/>
        </authorList>
    </citation>
    <scope>FUNCTION</scope>
    <scope>CATALYTIC ACTIVITY</scope>
    <scope>PATHWAY</scope>
    <scope>SUBCELLULAR LOCATION</scope>
</reference>
<dbReference type="EC" id="2.4.1.259" evidence="4"/>
<dbReference type="EC" id="2.4.1.261" evidence="4"/>
<dbReference type="EMBL" id="AC051629">
    <property type="protein sequence ID" value="AAF99843.1"/>
    <property type="molecule type" value="Genomic_DNA"/>
</dbReference>
<dbReference type="EMBL" id="CP002684">
    <property type="protein sequence ID" value="AEE29518.1"/>
    <property type="molecule type" value="Genomic_DNA"/>
</dbReference>
<dbReference type="EMBL" id="AY140061">
    <property type="protein sequence ID" value="AAM98202.1"/>
    <property type="molecule type" value="mRNA"/>
</dbReference>
<dbReference type="EMBL" id="BT010395">
    <property type="protein sequence ID" value="AAQ56838.1"/>
    <property type="molecule type" value="mRNA"/>
</dbReference>
<dbReference type="PIR" id="D86304">
    <property type="entry name" value="D86304"/>
</dbReference>
<dbReference type="BioGRID" id="23501">
    <property type="interactions" value="1"/>
</dbReference>
<dbReference type="FunCoup" id="Q9FZ49">
    <property type="interactions" value="4566"/>
</dbReference>
<dbReference type="IntAct" id="Q9FZ49">
    <property type="interactions" value="1"/>
</dbReference>
<dbReference type="STRING" id="3702.Q9FZ49"/>
<dbReference type="CAZy" id="GT22">
    <property type="family name" value="Glycosyltransferase Family 22"/>
</dbReference>
<dbReference type="GlyCosmos" id="Q9FZ49">
    <property type="glycosylation" value="1 site, No reported glycans"/>
</dbReference>
<dbReference type="GlyGen" id="Q9FZ49">
    <property type="glycosylation" value="1 site"/>
</dbReference>
<dbReference type="PaxDb" id="3702-AT1G16900.1"/>
<dbReference type="ProteomicsDB" id="244951"/>
<dbReference type="EnsemblPlants" id="AT1G16900.1">
    <property type="protein sequence ID" value="AT1G16900.1"/>
    <property type="gene ID" value="AT1G16900"/>
</dbReference>
<dbReference type="GeneID" id="838261"/>
<dbReference type="Gramene" id="AT1G16900.1">
    <property type="protein sequence ID" value="AT1G16900.1"/>
    <property type="gene ID" value="AT1G16900"/>
</dbReference>
<dbReference type="KEGG" id="ath:AT1G16900"/>
<dbReference type="Araport" id="AT1G16900"/>
<dbReference type="TAIR" id="AT1G16900">
    <property type="gene designation" value="EBS3"/>
</dbReference>
<dbReference type="eggNOG" id="KOG2515">
    <property type="taxonomic scope" value="Eukaryota"/>
</dbReference>
<dbReference type="HOGENOM" id="CLU_018152_1_1_1"/>
<dbReference type="InParanoid" id="Q9FZ49"/>
<dbReference type="OMA" id="PRDMHAK"/>
<dbReference type="OrthoDB" id="497541at2759"/>
<dbReference type="PhylomeDB" id="Q9FZ49"/>
<dbReference type="BioCyc" id="ARA:AT1G16900-MONOMER"/>
<dbReference type="BRENDA" id="2.4.1.259">
    <property type="organism ID" value="399"/>
</dbReference>
<dbReference type="BRENDA" id="2.4.1.261">
    <property type="organism ID" value="399"/>
</dbReference>
<dbReference type="UniPathway" id="UPA00378"/>
<dbReference type="PRO" id="PR:Q9FZ49"/>
<dbReference type="Proteomes" id="UP000006548">
    <property type="component" value="Chromosome 1"/>
</dbReference>
<dbReference type="ExpressionAtlas" id="Q9FZ49">
    <property type="expression patterns" value="baseline and differential"/>
</dbReference>
<dbReference type="GO" id="GO:0005783">
    <property type="term" value="C:endoplasmic reticulum"/>
    <property type="evidence" value="ECO:0007005"/>
    <property type="project" value="TAIR"/>
</dbReference>
<dbReference type="GO" id="GO:0005789">
    <property type="term" value="C:endoplasmic reticulum membrane"/>
    <property type="evidence" value="ECO:0007669"/>
    <property type="project" value="UniProtKB-SubCell"/>
</dbReference>
<dbReference type="GO" id="GO:0000026">
    <property type="term" value="F:alpha-1,2-mannosyltransferase activity"/>
    <property type="evidence" value="ECO:0000316"/>
    <property type="project" value="TAIR"/>
</dbReference>
<dbReference type="GO" id="GO:0052926">
    <property type="term" value="F:dol-P-Man:Man(6)GlcNAc(2)-PP-Dol alpha-1,2-mannosyltransferase activity"/>
    <property type="evidence" value="ECO:0007669"/>
    <property type="project" value="UniProtKB-EC"/>
</dbReference>
<dbReference type="GO" id="GO:0052918">
    <property type="term" value="F:dol-P-Man:Man(8)GlcNAc(2)-PP-Dol alpha-1,2-mannosyltransferase activity"/>
    <property type="evidence" value="ECO:0007669"/>
    <property type="project" value="UniProtKB-EC"/>
</dbReference>
<dbReference type="GO" id="GO:0004377">
    <property type="term" value="F:GDP-Man:Man3GlcNAc2-PP-Dol alpha-1,2-mannosyltransferase activity"/>
    <property type="evidence" value="ECO:0000303"/>
    <property type="project" value="UniProtKB"/>
</dbReference>
<dbReference type="GO" id="GO:0016301">
    <property type="term" value="F:kinase activity"/>
    <property type="evidence" value="ECO:0007669"/>
    <property type="project" value="UniProtKB-KW"/>
</dbReference>
<dbReference type="GO" id="GO:0006488">
    <property type="term" value="P:dolichol-linked oligosaccharide biosynthetic process"/>
    <property type="evidence" value="ECO:0000303"/>
    <property type="project" value="UniProtKB"/>
</dbReference>
<dbReference type="InterPro" id="IPR005599">
    <property type="entry name" value="GPI_mannosylTrfase"/>
</dbReference>
<dbReference type="PANTHER" id="PTHR22760:SF2">
    <property type="entry name" value="ALPHA-1,2-MANNOSYLTRANSFERASE ALG9"/>
    <property type="match status" value="1"/>
</dbReference>
<dbReference type="PANTHER" id="PTHR22760">
    <property type="entry name" value="GLYCOSYLTRANSFERASE"/>
    <property type="match status" value="1"/>
</dbReference>
<dbReference type="Pfam" id="PF03901">
    <property type="entry name" value="Glyco_transf_22"/>
    <property type="match status" value="1"/>
</dbReference>
<organism>
    <name type="scientific">Arabidopsis thaliana</name>
    <name type="common">Mouse-ear cress</name>
    <dbReference type="NCBI Taxonomy" id="3702"/>
    <lineage>
        <taxon>Eukaryota</taxon>
        <taxon>Viridiplantae</taxon>
        <taxon>Streptophyta</taxon>
        <taxon>Embryophyta</taxon>
        <taxon>Tracheophyta</taxon>
        <taxon>Spermatophyta</taxon>
        <taxon>Magnoliopsida</taxon>
        <taxon>eudicotyledons</taxon>
        <taxon>Gunneridae</taxon>
        <taxon>Pentapetalae</taxon>
        <taxon>rosids</taxon>
        <taxon>malvids</taxon>
        <taxon>Brassicales</taxon>
        <taxon>Brassicaceae</taxon>
        <taxon>Camelineae</taxon>
        <taxon>Arabidopsis</taxon>
    </lineage>
</organism>
<keyword id="KW-0256">Endoplasmic reticulum</keyword>
<keyword id="KW-0325">Glycoprotein</keyword>
<keyword id="KW-0328">Glycosyltransferase</keyword>
<keyword id="KW-0418">Kinase</keyword>
<keyword id="KW-0472">Membrane</keyword>
<keyword id="KW-1185">Reference proteome</keyword>
<keyword id="KW-0808">Transferase</keyword>
<keyword id="KW-0812">Transmembrane</keyword>
<keyword id="KW-1133">Transmembrane helix</keyword>
<protein>
    <recommendedName>
        <fullName evidence="6">Alpha-1,2-mannosyltransferase ALG9</fullName>
        <ecNumber evidence="4">2.4.1.259</ecNumber>
        <ecNumber evidence="4">2.4.1.261</ecNumber>
    </recommendedName>
    <alternativeName>
        <fullName>Asparagine-linked glycosylation protein 9</fullName>
    </alternativeName>
    <alternativeName>
        <fullName>Dol-P-Man:Man(6)GlcNAc(2)-PP-Dol alpha-1,2-mannosyltransferase</fullName>
    </alternativeName>
    <alternativeName>
        <fullName>Dol-P-Man:Man(8)GlcNAc(2)-PP-Dol alpha-1,2-mannosyltransferase</fullName>
    </alternativeName>
</protein>
<accession>Q9FZ49</accession>
<proteinExistence type="evidence at protein level"/>
<gene>
    <name type="primary">ALG9</name>
    <name type="ordered locus">At1g16900</name>
    <name type="ORF">F17F16.20</name>
    <name type="ORF">F6I1.10</name>
</gene>
<feature type="chain" id="PRO_0000412587" description="Alpha-1,2-mannosyltransferase ALG9">
    <location>
        <begin position="1"/>
        <end position="570"/>
    </location>
</feature>
<feature type="transmembrane region" description="Helical" evidence="2">
    <location>
        <begin position="129"/>
        <end position="149"/>
    </location>
</feature>
<feature type="transmembrane region" description="Helical" evidence="2">
    <location>
        <begin position="160"/>
        <end position="180"/>
    </location>
</feature>
<feature type="transmembrane region" description="Helical" evidence="2">
    <location>
        <begin position="208"/>
        <end position="228"/>
    </location>
</feature>
<feature type="transmembrane region" description="Helical" evidence="2">
    <location>
        <begin position="237"/>
        <end position="257"/>
    </location>
</feature>
<feature type="transmembrane region" description="Helical" evidence="2">
    <location>
        <begin position="297"/>
        <end position="317"/>
    </location>
</feature>
<feature type="transmembrane region" description="Helical" evidence="2">
    <location>
        <begin position="324"/>
        <end position="344"/>
    </location>
</feature>
<feature type="transmembrane region" description="Helical" evidence="2">
    <location>
        <begin position="349"/>
        <end position="369"/>
    </location>
</feature>
<feature type="transmembrane region" description="Helical" evidence="2">
    <location>
        <begin position="381"/>
        <end position="401"/>
    </location>
</feature>
<feature type="region of interest" description="Disordered" evidence="3">
    <location>
        <begin position="1"/>
        <end position="37"/>
    </location>
</feature>
<feature type="compositionally biased region" description="Low complexity" evidence="3">
    <location>
        <begin position="14"/>
        <end position="25"/>
    </location>
</feature>
<feature type="glycosylation site" description="N-linked (GlcNAc...) asparagine" evidence="2">
    <location>
        <position position="473"/>
    </location>
</feature>
<evidence type="ECO:0000250" key="1">
    <source>
        <dbReference type="UniProtKB" id="P53868"/>
    </source>
</evidence>
<evidence type="ECO:0000255" key="2"/>
<evidence type="ECO:0000256" key="3">
    <source>
        <dbReference type="SAM" id="MobiDB-lite"/>
    </source>
</evidence>
<evidence type="ECO:0000269" key="4">
    <source>
    </source>
</evidence>
<evidence type="ECO:0000305" key="5"/>
<evidence type="ECO:0000305" key="6">
    <source>
    </source>
</evidence>